<gene>
    <name type="primary">nadD</name>
    <name type="ordered locus">TP_0741</name>
</gene>
<evidence type="ECO:0000250" key="1"/>
<evidence type="ECO:0000305" key="2"/>
<sequence>MKLALFGGSYDPVHLGHLLLADAVHRHAGYDRVLFVPTFVSPFKEKEGSASAHDRVRMLHLAIGTTPYFSVEECEIRRGGISYTAETVQHVREKYGAQLEGKLALVLGEDAARSVPHWHAFDSWSTHVDFVVGARPVTSGDGGNVERATRTLQSFPFPWVSAENVALPISSTYIRTAIQRGRSWGYLVPSPVREYIIARGLYRS</sequence>
<reference key="1">
    <citation type="journal article" date="1998" name="Science">
        <title>Complete genome sequence of Treponema pallidum, the syphilis spirochete.</title>
        <authorList>
            <person name="Fraser C.M."/>
            <person name="Norris S.J."/>
            <person name="Weinstock G.M."/>
            <person name="White O."/>
            <person name="Sutton G.G."/>
            <person name="Dodson R.J."/>
            <person name="Gwinn M.L."/>
            <person name="Hickey E.K."/>
            <person name="Clayton R.A."/>
            <person name="Ketchum K.A."/>
            <person name="Sodergren E."/>
            <person name="Hardham J.M."/>
            <person name="McLeod M.P."/>
            <person name="Salzberg S.L."/>
            <person name="Peterson J.D."/>
            <person name="Khalak H.G."/>
            <person name="Richardson D.L."/>
            <person name="Howell J.K."/>
            <person name="Chidambaram M."/>
            <person name="Utterback T.R."/>
            <person name="McDonald L.A."/>
            <person name="Artiach P."/>
            <person name="Bowman C."/>
            <person name="Cotton M.D."/>
            <person name="Fujii C."/>
            <person name="Garland S.A."/>
            <person name="Hatch B."/>
            <person name="Horst K."/>
            <person name="Roberts K.M."/>
            <person name="Sandusky M."/>
            <person name="Weidman J.F."/>
            <person name="Smith H.O."/>
            <person name="Venter J.C."/>
        </authorList>
    </citation>
    <scope>NUCLEOTIDE SEQUENCE [LARGE SCALE GENOMIC DNA]</scope>
    <source>
        <strain>Nichols</strain>
    </source>
</reference>
<comment type="function">
    <text evidence="1">Catalyzes the reversible adenylation of nicotinate mononucleotide (NaMN) to nicotinic acid adenine dinucleotide (NaAD).</text>
</comment>
<comment type="catalytic activity">
    <reaction>
        <text>nicotinate beta-D-ribonucleotide + ATP + H(+) = deamido-NAD(+) + diphosphate</text>
        <dbReference type="Rhea" id="RHEA:22860"/>
        <dbReference type="ChEBI" id="CHEBI:15378"/>
        <dbReference type="ChEBI" id="CHEBI:30616"/>
        <dbReference type="ChEBI" id="CHEBI:33019"/>
        <dbReference type="ChEBI" id="CHEBI:57502"/>
        <dbReference type="ChEBI" id="CHEBI:58437"/>
        <dbReference type="EC" id="2.7.7.18"/>
    </reaction>
</comment>
<comment type="pathway">
    <text>Cofactor biosynthesis; NAD(+) biosynthesis; deamido-NAD(+) from nicotinate D-ribonucleotide: step 1/1.</text>
</comment>
<comment type="similarity">
    <text evidence="2">Belongs to the NadD family.</text>
</comment>
<name>NADD_TREPA</name>
<organism>
    <name type="scientific">Treponema pallidum (strain Nichols)</name>
    <dbReference type="NCBI Taxonomy" id="243276"/>
    <lineage>
        <taxon>Bacteria</taxon>
        <taxon>Pseudomonadati</taxon>
        <taxon>Spirochaetota</taxon>
        <taxon>Spirochaetia</taxon>
        <taxon>Spirochaetales</taxon>
        <taxon>Treponemataceae</taxon>
        <taxon>Treponema</taxon>
    </lineage>
</organism>
<protein>
    <recommendedName>
        <fullName>Probable nicotinate-nucleotide adenylyltransferase</fullName>
        <ecNumber>2.7.7.18</ecNumber>
    </recommendedName>
    <alternativeName>
        <fullName>Deamido-NAD(+) diphosphorylase</fullName>
    </alternativeName>
    <alternativeName>
        <fullName>Deamido-NAD(+) pyrophosphorylase</fullName>
    </alternativeName>
    <alternativeName>
        <fullName>Nicotinate mononucleotide adenylyltransferase</fullName>
        <shortName>NaMN adenylyltransferase</shortName>
    </alternativeName>
</protein>
<dbReference type="EC" id="2.7.7.18"/>
<dbReference type="EMBL" id="AE000520">
    <property type="protein sequence ID" value="AAC65710.1"/>
    <property type="molecule type" value="Genomic_DNA"/>
</dbReference>
<dbReference type="PIR" id="B71286">
    <property type="entry name" value="B71286"/>
</dbReference>
<dbReference type="RefSeq" id="WP_010882186.1">
    <property type="nucleotide sequence ID" value="NC_021490.2"/>
</dbReference>
<dbReference type="SMR" id="O83723"/>
<dbReference type="IntAct" id="O83723">
    <property type="interactions" value="12"/>
</dbReference>
<dbReference type="STRING" id="243276.TP_0741"/>
<dbReference type="EnsemblBacteria" id="AAC65710">
    <property type="protein sequence ID" value="AAC65710"/>
    <property type="gene ID" value="TP_0741"/>
</dbReference>
<dbReference type="GeneID" id="93876509"/>
<dbReference type="KEGG" id="tpa:TP_0741"/>
<dbReference type="KEGG" id="tpw:TPANIC_0741"/>
<dbReference type="eggNOG" id="COG1057">
    <property type="taxonomic scope" value="Bacteria"/>
</dbReference>
<dbReference type="HOGENOM" id="CLU_069765_3_1_12"/>
<dbReference type="OrthoDB" id="5295945at2"/>
<dbReference type="UniPathway" id="UPA00253">
    <property type="reaction ID" value="UER00332"/>
</dbReference>
<dbReference type="Proteomes" id="UP000000811">
    <property type="component" value="Chromosome"/>
</dbReference>
<dbReference type="GO" id="GO:0005524">
    <property type="term" value="F:ATP binding"/>
    <property type="evidence" value="ECO:0007669"/>
    <property type="project" value="UniProtKB-KW"/>
</dbReference>
<dbReference type="GO" id="GO:0004515">
    <property type="term" value="F:nicotinate-nucleotide adenylyltransferase activity"/>
    <property type="evidence" value="ECO:0007669"/>
    <property type="project" value="UniProtKB-UniRule"/>
</dbReference>
<dbReference type="GO" id="GO:0009435">
    <property type="term" value="P:NAD biosynthetic process"/>
    <property type="evidence" value="ECO:0007669"/>
    <property type="project" value="UniProtKB-UniRule"/>
</dbReference>
<dbReference type="CDD" id="cd02165">
    <property type="entry name" value="NMNAT"/>
    <property type="match status" value="1"/>
</dbReference>
<dbReference type="Gene3D" id="3.40.50.620">
    <property type="entry name" value="HUPs"/>
    <property type="match status" value="1"/>
</dbReference>
<dbReference type="HAMAP" id="MF_00244">
    <property type="entry name" value="NaMN_adenylyltr"/>
    <property type="match status" value="1"/>
</dbReference>
<dbReference type="InterPro" id="IPR004821">
    <property type="entry name" value="Cyt_trans-like"/>
</dbReference>
<dbReference type="InterPro" id="IPR005248">
    <property type="entry name" value="NadD/NMNAT"/>
</dbReference>
<dbReference type="InterPro" id="IPR014729">
    <property type="entry name" value="Rossmann-like_a/b/a_fold"/>
</dbReference>
<dbReference type="NCBIfam" id="TIGR00125">
    <property type="entry name" value="cyt_tran_rel"/>
    <property type="match status" value="1"/>
</dbReference>
<dbReference type="NCBIfam" id="TIGR00482">
    <property type="entry name" value="nicotinate (nicotinamide) nucleotide adenylyltransferase"/>
    <property type="match status" value="1"/>
</dbReference>
<dbReference type="PANTHER" id="PTHR39321">
    <property type="entry name" value="NICOTINATE-NUCLEOTIDE ADENYLYLTRANSFERASE-RELATED"/>
    <property type="match status" value="1"/>
</dbReference>
<dbReference type="PANTHER" id="PTHR39321:SF3">
    <property type="entry name" value="PHOSPHOPANTETHEINE ADENYLYLTRANSFERASE"/>
    <property type="match status" value="1"/>
</dbReference>
<dbReference type="Pfam" id="PF01467">
    <property type="entry name" value="CTP_transf_like"/>
    <property type="match status" value="1"/>
</dbReference>
<dbReference type="SUPFAM" id="SSF52374">
    <property type="entry name" value="Nucleotidylyl transferase"/>
    <property type="match status" value="1"/>
</dbReference>
<accession>O83723</accession>
<feature type="chain" id="PRO_0000181462" description="Probable nicotinate-nucleotide adenylyltransferase">
    <location>
        <begin position="1"/>
        <end position="204"/>
    </location>
</feature>
<keyword id="KW-0067">ATP-binding</keyword>
<keyword id="KW-0520">NAD</keyword>
<keyword id="KW-0547">Nucleotide-binding</keyword>
<keyword id="KW-0548">Nucleotidyltransferase</keyword>
<keyword id="KW-0662">Pyridine nucleotide biosynthesis</keyword>
<keyword id="KW-1185">Reference proteome</keyword>
<keyword id="KW-0808">Transferase</keyword>
<proteinExistence type="inferred from homology"/>